<comment type="function">
    <text evidence="1 2 3 7">The small GTPases Rab are key regulators of intracellular membrane trafficking, from the formation of transport vesicles to their fusion with membranes. Rabs cycle between an inactive GDP-bound form and an active GTP-bound form that is able to recruit to membranes different set of downstream effectors directly responsible for vesicle formation, movement, tethering and fusion (By similarity). The small Rab GTPase RAB11A regulates endocytic recycling (PubMed:11163216). Forms a functional Rab11/RAB11FIP3/dynein complex that regulates the movement of peripheral sorting endosomes (SE) along microtubule tracks toward the microtubule organizing center/centrosome, generating the endosomal recycling compartment (ERC). Acts as a major regulator of membrane delivery during cytokinesis. Together with MYO5B and RAB8A participates in epithelial cell polarization. Together with Rabin8/RAB3IP, RAB8A, the exocyst complex, PARD3, PRKCI, ANXA2, CDC42 and DNMBP promotes transcytosis of PODXL to the apical membrane initiation sites (AMIS), apical surface formation and lumenogenesis. Together with MYO5B participates in CFTR trafficking to the plasma membrane and TF (Transferrin) recycling in nonpolarized cells. Required in a complex with MYO5B and RAB11FIP2 for the transport of NPC1L1 to the plasma membrane. Participates in the sorting and basolateral transport of CDH1 from the Golgi apparatus to the plasma membrane (By similarity). Regulates the recycling of FCGRT (receptor of Fc region of monomeric IgG) to basolateral membranes (By similarity). May also play a role in melanosome transport and release from melanocytes (By similarity). Promotes Rabin8/RAB3IP preciliary vesicular trafficking to mother centriole by forming a ciliary targeting complex containing Rab11, ASAP1, Rabin8/RAB3IP, RAB11FIP3 and ARF4, thereby regulating ciliogenesis initiation. On the contrary, upon LPAR1 receptor signaling pathway activation, interaction with phosphorylated WDR44 prevents Rab11-RAB3IP-RAB11FIP3 complex formation and cilia growth. Participates in the export of a subset of neosynthesized proteins through a Rab8-Rab10-Rab11-endososomal dependent export route via interaction with WDR44 (By similarity).</text>
</comment>
<comment type="catalytic activity">
    <reaction evidence="4">
        <text>GTP + H2O = GDP + phosphate + H(+)</text>
        <dbReference type="Rhea" id="RHEA:19669"/>
        <dbReference type="ChEBI" id="CHEBI:15377"/>
        <dbReference type="ChEBI" id="CHEBI:15378"/>
        <dbReference type="ChEBI" id="CHEBI:37565"/>
        <dbReference type="ChEBI" id="CHEBI:43474"/>
        <dbReference type="ChEBI" id="CHEBI:58189"/>
        <dbReference type="EC" id="3.6.5.2"/>
    </reaction>
    <physiologicalReaction direction="left-to-right" evidence="4">
        <dbReference type="Rhea" id="RHEA:19670"/>
    </physiologicalReaction>
</comment>
<comment type="cofactor">
    <cofactor evidence="2">
        <name>Mg(2+)</name>
        <dbReference type="ChEBI" id="CHEBI:18420"/>
    </cofactor>
</comment>
<comment type="activity regulation">
    <text evidence="11">Regulated by guanine nucleotide exchange factors (GEFs) which promote the exchange of bound GDP for free GTP. Regulated by GTPase activating proteins (GAPs) which increase the GTP hydrolysis activity. Inhibited by GDP dissociation inhibitors (GDIs) which prevent Rab-GDP dissociation.</text>
</comment>
<comment type="subunit">
    <text evidence="2 3 7 8 9">Interacts (GTP-bound form) with RAB11FIPs (via their C-termini) including RAB11FIP1, RAB11FIP2, RAB11FIP3, RAB11FIP4 and RAB11FIP5 effectors (By similarity). Forms a complex with RAB11FIP3 and dynein intermediate chain DYNC1LI1; the interaction between RAB11A1 and RAB11FIP3 is direct; the complex regulates endocytic trafficking (By similarity). Interacts with EVI5; EVI5 and RAB11FIP3 may be mutually exclusive and compete for binding RAB11A (By similarity). Interacts with SGSM1, SGSM2, SGSM3 and VIPAS39 (By similarity). Interacts with EXOC6 in a GTP-dependent manner. Interacts with RAB11FIP5 (PubMed:11163216). Interacts with STXBP6 (PubMed:12145319). Interacts (GDP-bound form) with ZFYVE27 (PubMed:17082457). Interacts with BIRC6/bruce (By similarity). May interact with TBC1D14 (By similarity). Interacts with UNC119; in a cell cycle-dependent manner (By similarity). GDP-bound and nucleotide-free forms interact with SH3BP5 (By similarity). Interacts (GDP-bound form) with KIF5A in a ZFYVE27-dependent manner (By similarity). Interacts (GDP-bound form) with RELCH (By similarity). Found in a complex composed of RELCH, OSBP1 and RAB11A (By similarity). Interacts with TBC1D12 (By similarity). Interacts with DEF6 (By similarity). Interacts with ATP9A (By similarity). Forms a heterotetramer with RAB11FIP3; the GTP-bound form is preferred for binding. Forms a complex with Rabin8/RAB3IP and RAB11FIP3, probably a heterohexamer with two of each protein subunit, where Rabin8/RAB3IP and RAB11FIP3 simultaneously bind to RAB11A; the complex promotes preciliary trafficking and cilia growth. Forms a complex containing RAB11A, ASAP1, Rabin8/RAB3IP, RAP11FIP3 and ARF4; the complex promotes preciliary trafficking; the complex binds to RHO in photoreceptor cells and promotes RHO ciliary transport. Interacts (GTP-bound form) with WDR44; the interaction prevents RAB11A-RAB3IP-RAB11FIP3 complex formation (By similarity).</text>
</comment>
<comment type="subcellular location">
    <subcellularLocation>
        <location evidence="2">Cell membrane</location>
        <topology evidence="11">Lipid-anchor</topology>
    </subcellularLocation>
    <subcellularLocation>
        <location evidence="2">Endosome membrane</location>
    </subcellularLocation>
    <subcellularLocation>
        <location evidence="2">Recycling endosome membrane</location>
        <topology evidence="11">Lipid-anchor</topology>
    </subcellularLocation>
    <subcellularLocation>
        <location evidence="2">Cleavage furrow</location>
    </subcellularLocation>
    <subcellularLocation>
        <location evidence="2">Cytoplasmic vesicle</location>
        <location evidence="2">Phagosome</location>
    </subcellularLocation>
    <subcellularLocation>
        <location evidence="2">Cytoplasmic vesicle membrane</location>
    </subcellularLocation>
    <subcellularLocation>
        <location evidence="2">Golgi apparatus</location>
    </subcellularLocation>
    <subcellularLocation>
        <location evidence="2">Golgi apparatus</location>
        <location evidence="2">trans-Golgi network</location>
    </subcellularLocation>
    <subcellularLocation>
        <location evidence="2">Cytoplasmic vesicle</location>
    </subcellularLocation>
    <text evidence="2">Localized to WDR44-positive endosomes and tubules. Translocates with RAB11FIP2 from the vesicles of the endocytic recycling compartment (ERC) to the plasma membrane. Localizes to the cleavage furrow. During interphase, localized in vesicles continuously moving from peripheral sorting endosomes towards the pericentrosomal ERC. Colocalizes with PARD3, PRKCI, EXOC5, OCLN, PODXL and RAB8A in apical membrane initiation sites (AMIS) during the generation of apical surface and lumenogenesis. Localized to rhodopsin transport carriers when interacting with RAB11AFIP3 and ASAP1 in photoreceptors. Colocalizes with RAB11AFIP1 on punctate vesicles (By similarity).</text>
</comment>
<comment type="tissue specificity">
    <text evidence="10">Detected in various tissues, such as brain, testis, spleen, and heart.</text>
</comment>
<comment type="domain">
    <text evidence="2">Switch 1, switch 2 and the interswitch regions are characteristic of Rab GTPases and mediate the interactions with Rab downstream effectors. The switch regions undergo conformational changes upon nucleotide binding which drives interaction with specific sets of effector proteins, with most effectors only binding to GTP-bound Rab.</text>
</comment>
<comment type="similarity">
    <text evidence="11">Belongs to the small GTPase superfamily. Rab family.</text>
</comment>
<organism>
    <name type="scientific">Rattus norvegicus</name>
    <name type="common">Rat</name>
    <dbReference type="NCBI Taxonomy" id="10116"/>
    <lineage>
        <taxon>Eukaryota</taxon>
        <taxon>Metazoa</taxon>
        <taxon>Chordata</taxon>
        <taxon>Craniata</taxon>
        <taxon>Vertebrata</taxon>
        <taxon>Euteleostomi</taxon>
        <taxon>Mammalia</taxon>
        <taxon>Eutheria</taxon>
        <taxon>Euarchontoglires</taxon>
        <taxon>Glires</taxon>
        <taxon>Rodentia</taxon>
        <taxon>Myomorpha</taxon>
        <taxon>Muroidea</taxon>
        <taxon>Muridae</taxon>
        <taxon>Murinae</taxon>
        <taxon>Rattus</taxon>
    </lineage>
</organism>
<feature type="initiator methionine" description="Removed" evidence="2">
    <location>
        <position position="1"/>
    </location>
</feature>
<feature type="chain" id="PRO_0000121156" description="Ras-related protein Rab-11A">
    <location>
        <begin position="2"/>
        <end position="213"/>
    </location>
</feature>
<feature type="propeptide" id="PRO_0000370812" description="Removed in mature form" evidence="5">
    <location>
        <begin position="214"/>
        <end position="216"/>
    </location>
</feature>
<feature type="region of interest" description="Disordered" evidence="6">
    <location>
        <begin position="183"/>
        <end position="211"/>
    </location>
</feature>
<feature type="short sequence motif" description="Switch 1" evidence="2">
    <location>
        <begin position="36"/>
        <end position="47"/>
    </location>
</feature>
<feature type="short sequence motif" description="Switch 2" evidence="2">
    <location>
        <begin position="67"/>
        <end position="86"/>
    </location>
</feature>
<feature type="binding site" evidence="2">
    <location>
        <position position="20"/>
    </location>
    <ligand>
        <name>GTP</name>
        <dbReference type="ChEBI" id="CHEBI:37565"/>
    </ligand>
</feature>
<feature type="binding site" evidence="2">
    <location>
        <position position="21"/>
    </location>
    <ligand>
        <name>GTP</name>
        <dbReference type="ChEBI" id="CHEBI:37565"/>
    </ligand>
</feature>
<feature type="binding site" evidence="2">
    <location>
        <position position="22"/>
    </location>
    <ligand>
        <name>GTP</name>
        <dbReference type="ChEBI" id="CHEBI:37565"/>
    </ligand>
</feature>
<feature type="binding site" evidence="2">
    <location>
        <position position="23"/>
    </location>
    <ligand>
        <name>GTP</name>
        <dbReference type="ChEBI" id="CHEBI:37565"/>
    </ligand>
</feature>
<feature type="binding site" evidence="2">
    <location>
        <position position="24"/>
    </location>
    <ligand>
        <name>GTP</name>
        <dbReference type="ChEBI" id="CHEBI:37565"/>
    </ligand>
</feature>
<feature type="binding site" evidence="2">
    <location>
        <position position="25"/>
    </location>
    <ligand>
        <name>GTP</name>
        <dbReference type="ChEBI" id="CHEBI:37565"/>
    </ligand>
</feature>
<feature type="binding site" evidence="2">
    <location>
        <position position="25"/>
    </location>
    <ligand>
        <name>Mg(2+)</name>
        <dbReference type="ChEBI" id="CHEBI:18420"/>
    </ligand>
</feature>
<feature type="binding site" evidence="2">
    <location>
        <position position="26"/>
    </location>
    <ligand>
        <name>GTP</name>
        <dbReference type="ChEBI" id="CHEBI:37565"/>
    </ligand>
</feature>
<feature type="binding site" evidence="2">
    <location>
        <position position="37"/>
    </location>
    <ligand>
        <name>GTP</name>
        <dbReference type="ChEBI" id="CHEBI:37565"/>
    </ligand>
</feature>
<feature type="binding site" evidence="2">
    <location>
        <position position="38"/>
    </location>
    <ligand>
        <name>GTP</name>
        <dbReference type="ChEBI" id="CHEBI:37565"/>
    </ligand>
</feature>
<feature type="binding site" evidence="2">
    <location>
        <position position="40"/>
    </location>
    <ligand>
        <name>GTP</name>
        <dbReference type="ChEBI" id="CHEBI:37565"/>
    </ligand>
</feature>
<feature type="binding site" evidence="2">
    <location>
        <position position="42"/>
    </location>
    <ligand>
        <name>GTP</name>
        <dbReference type="ChEBI" id="CHEBI:37565"/>
    </ligand>
</feature>
<feature type="binding site" evidence="2">
    <location>
        <position position="43"/>
    </location>
    <ligand>
        <name>GTP</name>
        <dbReference type="ChEBI" id="CHEBI:37565"/>
    </ligand>
</feature>
<feature type="binding site" evidence="2">
    <location>
        <position position="43"/>
    </location>
    <ligand>
        <name>Mg(2+)</name>
        <dbReference type="ChEBI" id="CHEBI:18420"/>
    </ligand>
</feature>
<feature type="binding site" evidence="2">
    <location>
        <position position="66"/>
    </location>
    <ligand>
        <name>Mg(2+)</name>
        <dbReference type="ChEBI" id="CHEBI:18420"/>
    </ligand>
</feature>
<feature type="binding site" evidence="2">
    <location>
        <position position="69"/>
    </location>
    <ligand>
        <name>GTP</name>
        <dbReference type="ChEBI" id="CHEBI:37565"/>
    </ligand>
</feature>
<feature type="binding site" evidence="2">
    <location>
        <position position="124"/>
    </location>
    <ligand>
        <name>GTP</name>
        <dbReference type="ChEBI" id="CHEBI:37565"/>
    </ligand>
</feature>
<feature type="binding site" evidence="2">
    <location>
        <position position="125"/>
    </location>
    <ligand>
        <name>GTP</name>
        <dbReference type="ChEBI" id="CHEBI:37565"/>
    </ligand>
</feature>
<feature type="binding site" evidence="2">
    <location>
        <position position="127"/>
    </location>
    <ligand>
        <name>GTP</name>
        <dbReference type="ChEBI" id="CHEBI:37565"/>
    </ligand>
</feature>
<feature type="binding site" evidence="2">
    <location>
        <position position="155"/>
    </location>
    <ligand>
        <name>GTP</name>
        <dbReference type="ChEBI" id="CHEBI:37565"/>
    </ligand>
</feature>
<feature type="binding site" evidence="2">
    <location>
        <position position="156"/>
    </location>
    <ligand>
        <name>GTP</name>
        <dbReference type="ChEBI" id="CHEBI:37565"/>
    </ligand>
</feature>
<feature type="modified residue" description="N-acetylglycine" evidence="2">
    <location>
        <position position="2"/>
    </location>
</feature>
<feature type="modified residue" description="Cysteine methyl ester" evidence="5">
    <location>
        <position position="213"/>
    </location>
</feature>
<feature type="lipid moiety-binding region" description="S-geranylgeranyl cysteine" evidence="2">
    <location>
        <position position="212"/>
    </location>
</feature>
<feature type="lipid moiety-binding region" description="S-geranylgeranyl cysteine" evidence="2">
    <location>
        <position position="213"/>
    </location>
</feature>
<name>RB11A_RAT</name>
<sequence length="216" mass="24394">MGTRDDEYDYLFKVVLIGDSGVGKSNLLSRFTRNEFNLESKSTIGVEFATRSIQVDGKTIKAQIWDTAGQERYRAITSAYYRGAVGALLVYDIAKHLTYENVERWLKELRDHADSNIVIMLVGNKSDLRHLRAVPTDEARAFAEKNGLSFIETSALDSTNVEAAFQTILTEIYRIVSQKQMSDRRENDMSPSNNVVPIHVPPTTENKPKVQCCQNI</sequence>
<keyword id="KW-0007">Acetylation</keyword>
<keyword id="KW-0131">Cell cycle</keyword>
<keyword id="KW-1003">Cell membrane</keyword>
<keyword id="KW-0968">Cytoplasmic vesicle</keyword>
<keyword id="KW-0967">Endosome</keyword>
<keyword id="KW-0333">Golgi apparatus</keyword>
<keyword id="KW-0342">GTP-binding</keyword>
<keyword id="KW-0378">Hydrolase</keyword>
<keyword id="KW-0449">Lipoprotein</keyword>
<keyword id="KW-0460">Magnesium</keyword>
<keyword id="KW-0472">Membrane</keyword>
<keyword id="KW-0479">Metal-binding</keyword>
<keyword id="KW-0488">Methylation</keyword>
<keyword id="KW-0547">Nucleotide-binding</keyword>
<keyword id="KW-0636">Prenylation</keyword>
<keyword id="KW-0653">Protein transport</keyword>
<keyword id="KW-1185">Reference proteome</keyword>
<keyword id="KW-0813">Transport</keyword>
<proteinExistence type="evidence at protein level"/>
<gene>
    <name evidence="12" type="primary">Rab11a</name>
    <name evidence="3" type="synonym">Rab11</name>
</gene>
<reference key="1">
    <citation type="journal article" date="1991" name="Biochem. Biophys. Res. Commun.">
        <title>Molecular cloning and characterization of a ras p21-like GTP-binding protein (24KG) from rat liver.</title>
        <authorList>
            <person name="Sakurada K."/>
            <person name="Uchida K."/>
            <person name="Yamaguchi K."/>
            <person name="Aisaka K."/>
            <person name="Ito S."/>
            <person name="Ohmori T."/>
            <person name="Takeyama Y."/>
            <person name="Ueda T."/>
            <person name="Hori Y."/>
            <person name="Ohyanagi H."/>
            <person name="Saitoh Y."/>
            <person name="Kaibuchi K."/>
            <person name="Takai Y."/>
        </authorList>
    </citation>
    <scope>NUCLEOTIDE SEQUENCE [MRNA]</scope>
    <scope>TISSUE SPECIFICITY</scope>
    <source>
        <tissue>Liver</tissue>
    </source>
</reference>
<reference key="2">
    <citation type="journal article" date="2004" name="Genome Res.">
        <title>The status, quality, and expansion of the NIH full-length cDNA project: the Mammalian Gene Collection (MGC).</title>
        <authorList>
            <consortium name="The MGC Project Team"/>
        </authorList>
    </citation>
    <scope>NUCLEOTIDE SEQUENCE [LARGE SCALE MRNA]</scope>
    <source>
        <tissue>Heart</tissue>
    </source>
</reference>
<reference key="3">
    <citation type="journal article" date="2000" name="Mol. Cell">
        <title>A Rab11/Rip11 protein complex regulates apical membrane trafficking via recycling endosomes.</title>
        <authorList>
            <person name="Prekeris R."/>
            <person name="Klumperman J."/>
            <person name="Scheller R.H."/>
        </authorList>
    </citation>
    <scope>FUNCTION</scope>
    <scope>INTERACTION WITH RAB11FIP5</scope>
</reference>
<reference key="4">
    <citation type="journal article" date="2002" name="J. Biol. Chem.">
        <title>Amisyn, a novel syntaxin-binding protein that may regulate SNARE complex assembly.</title>
        <authorList>
            <person name="Scales S.J."/>
            <person name="Hesser B.A."/>
            <person name="Masuda E.S."/>
            <person name="Scheller R.H."/>
        </authorList>
    </citation>
    <scope>INTERACTION WITH STXBP6</scope>
</reference>
<reference key="5">
    <citation type="journal article" date="2006" name="Science">
        <title>Protrudin induces neurite formation by directional membrane trafficking.</title>
        <authorList>
            <person name="Shirane M."/>
            <person name="Nakayama K.I."/>
        </authorList>
    </citation>
    <scope>INTERACTION WITH ZFYVE27</scope>
</reference>
<protein>
    <recommendedName>
        <fullName evidence="3">Ras-related protein Rab-11A</fullName>
        <shortName evidence="3">Rab-11</shortName>
        <ecNumber evidence="4">3.6.5.2</ecNumber>
    </recommendedName>
    <alternativeName>
        <fullName>24KG</fullName>
    </alternativeName>
</protein>
<evidence type="ECO:0000250" key="1">
    <source>
        <dbReference type="UniProtKB" id="P62490"/>
    </source>
</evidence>
<evidence type="ECO:0000250" key="2">
    <source>
        <dbReference type="UniProtKB" id="P62491"/>
    </source>
</evidence>
<evidence type="ECO:0000250" key="3">
    <source>
        <dbReference type="UniProtKB" id="P62492"/>
    </source>
</evidence>
<evidence type="ECO:0000250" key="4">
    <source>
        <dbReference type="UniProtKB" id="P62493"/>
    </source>
</evidence>
<evidence type="ECO:0000255" key="5"/>
<evidence type="ECO:0000256" key="6">
    <source>
        <dbReference type="SAM" id="MobiDB-lite"/>
    </source>
</evidence>
<evidence type="ECO:0000269" key="7">
    <source>
    </source>
</evidence>
<evidence type="ECO:0000269" key="8">
    <source>
    </source>
</evidence>
<evidence type="ECO:0000269" key="9">
    <source>
    </source>
</evidence>
<evidence type="ECO:0000269" key="10">
    <source>
    </source>
</evidence>
<evidence type="ECO:0000305" key="11"/>
<evidence type="ECO:0000312" key="12">
    <source>
        <dbReference type="RGD" id="619762"/>
    </source>
</evidence>
<accession>P62494</accession>
<accession>P24410</accession>
<accession>Q9JLX1</accession>
<dbReference type="EC" id="3.6.5.2" evidence="4"/>
<dbReference type="EMBL" id="M75153">
    <property type="protein sequence ID" value="AAA42012.1"/>
    <property type="molecule type" value="mRNA"/>
</dbReference>
<dbReference type="EMBL" id="BC085727">
    <property type="protein sequence ID" value="AAH85727.1"/>
    <property type="molecule type" value="mRNA"/>
</dbReference>
<dbReference type="PIR" id="JN0056">
    <property type="entry name" value="JN0056"/>
</dbReference>
<dbReference type="RefSeq" id="NP_112414.1">
    <property type="nucleotide sequence ID" value="NM_031152.3"/>
</dbReference>
<dbReference type="SMR" id="P62494"/>
<dbReference type="BioGRID" id="249688">
    <property type="interactions" value="1"/>
</dbReference>
<dbReference type="DIP" id="DIP-46857N"/>
<dbReference type="FunCoup" id="P62494">
    <property type="interactions" value="4597"/>
</dbReference>
<dbReference type="IntAct" id="P62494">
    <property type="interactions" value="7"/>
</dbReference>
<dbReference type="MINT" id="P62494"/>
<dbReference type="STRING" id="10116.ENSRNOP00000015598"/>
<dbReference type="iPTMnet" id="P62494"/>
<dbReference type="PhosphoSitePlus" id="P62494"/>
<dbReference type="jPOST" id="P62494"/>
<dbReference type="PaxDb" id="10116-ENSRNOP00000015598"/>
<dbReference type="Ensembl" id="ENSRNOT00000015598.4">
    <property type="protein sequence ID" value="ENSRNOP00000015598.3"/>
    <property type="gene ID" value="ENSRNOG00000011302.4"/>
</dbReference>
<dbReference type="GeneID" id="81830"/>
<dbReference type="KEGG" id="rno:81830"/>
<dbReference type="UCSC" id="RGD:619762">
    <property type="organism name" value="rat"/>
</dbReference>
<dbReference type="AGR" id="RGD:619762"/>
<dbReference type="CTD" id="8766"/>
<dbReference type="RGD" id="619762">
    <property type="gene designation" value="Rab11a"/>
</dbReference>
<dbReference type="eggNOG" id="KOG0087">
    <property type="taxonomic scope" value="Eukaryota"/>
</dbReference>
<dbReference type="GeneTree" id="ENSGT00940000154914"/>
<dbReference type="HOGENOM" id="CLU_041217_23_0_1"/>
<dbReference type="InParanoid" id="P62494"/>
<dbReference type="OrthoDB" id="9989112at2759"/>
<dbReference type="PhylomeDB" id="P62494"/>
<dbReference type="TreeFam" id="TF300099"/>
<dbReference type="Reactome" id="R-RNO-432040">
    <property type="pathway name" value="Vasopressin regulates renal water homeostasis via Aquaporins"/>
</dbReference>
<dbReference type="Reactome" id="R-RNO-5620912">
    <property type="pathway name" value="Anchoring of the basal body to the plasma membrane"/>
</dbReference>
<dbReference type="Reactome" id="R-RNO-5620916">
    <property type="pathway name" value="VxPx cargo-targeting to cilium"/>
</dbReference>
<dbReference type="Reactome" id="R-RNO-8854214">
    <property type="pathway name" value="TBC/RABGAPs"/>
</dbReference>
<dbReference type="Reactome" id="R-RNO-8873719">
    <property type="pathway name" value="RAB geranylgeranylation"/>
</dbReference>
<dbReference type="PRO" id="PR:P62494"/>
<dbReference type="Proteomes" id="UP000002494">
    <property type="component" value="Chromosome 8"/>
</dbReference>
<dbReference type="Bgee" id="ENSRNOG00000011302">
    <property type="expression patterns" value="Expressed in stomach and 20 other cell types or tissues"/>
</dbReference>
<dbReference type="GO" id="GO:0005814">
    <property type="term" value="C:centriole"/>
    <property type="evidence" value="ECO:0000266"/>
    <property type="project" value="RGD"/>
</dbReference>
<dbReference type="GO" id="GO:0005813">
    <property type="term" value="C:centrosome"/>
    <property type="evidence" value="ECO:0000250"/>
    <property type="project" value="UniProtKB"/>
</dbReference>
<dbReference type="GO" id="GO:0032154">
    <property type="term" value="C:cleavage furrow"/>
    <property type="evidence" value="ECO:0000250"/>
    <property type="project" value="UniProtKB"/>
</dbReference>
<dbReference type="GO" id="GO:0005737">
    <property type="term" value="C:cytoplasm"/>
    <property type="evidence" value="ECO:0000266"/>
    <property type="project" value="RGD"/>
</dbReference>
<dbReference type="GO" id="GO:0031410">
    <property type="term" value="C:cytoplasmic vesicle"/>
    <property type="evidence" value="ECO:0000266"/>
    <property type="project" value="RGD"/>
</dbReference>
<dbReference type="GO" id="GO:0005829">
    <property type="term" value="C:cytosol"/>
    <property type="evidence" value="ECO:0000250"/>
    <property type="project" value="UniProtKB"/>
</dbReference>
<dbReference type="GO" id="GO:0030666">
    <property type="term" value="C:endocytic vesicle membrane"/>
    <property type="evidence" value="ECO:0000250"/>
    <property type="project" value="UniProtKB"/>
</dbReference>
<dbReference type="GO" id="GO:0070382">
    <property type="term" value="C:exocytic vesicle"/>
    <property type="evidence" value="ECO:0000266"/>
    <property type="project" value="RGD"/>
</dbReference>
<dbReference type="GO" id="GO:0070062">
    <property type="term" value="C:extracellular exosome"/>
    <property type="evidence" value="ECO:0000266"/>
    <property type="project" value="RGD"/>
</dbReference>
<dbReference type="GO" id="GO:0098978">
    <property type="term" value="C:glutamatergic synapse"/>
    <property type="evidence" value="ECO:0000314"/>
    <property type="project" value="SynGO"/>
</dbReference>
<dbReference type="GO" id="GO:0005794">
    <property type="term" value="C:Golgi apparatus"/>
    <property type="evidence" value="ECO:0000318"/>
    <property type="project" value="GO_Central"/>
</dbReference>
<dbReference type="GO" id="GO:0000139">
    <property type="term" value="C:Golgi membrane"/>
    <property type="evidence" value="ECO:0000250"/>
    <property type="project" value="UniProtKB"/>
</dbReference>
<dbReference type="GO" id="GO:0005828">
    <property type="term" value="C:kinetochore microtubule"/>
    <property type="evidence" value="ECO:0000266"/>
    <property type="project" value="RGD"/>
</dbReference>
<dbReference type="GO" id="GO:0016020">
    <property type="term" value="C:membrane"/>
    <property type="evidence" value="ECO:0000266"/>
    <property type="project" value="RGD"/>
</dbReference>
<dbReference type="GO" id="GO:0005771">
    <property type="term" value="C:multivesicular body"/>
    <property type="evidence" value="ECO:0000266"/>
    <property type="project" value="RGD"/>
</dbReference>
<dbReference type="GO" id="GO:0048471">
    <property type="term" value="C:perinuclear region of cytoplasm"/>
    <property type="evidence" value="ECO:0000266"/>
    <property type="project" value="RGD"/>
</dbReference>
<dbReference type="GO" id="GO:0045335">
    <property type="term" value="C:phagocytic vesicle"/>
    <property type="evidence" value="ECO:0000250"/>
    <property type="project" value="UniProtKB"/>
</dbReference>
<dbReference type="GO" id="GO:0098837">
    <property type="term" value="C:postsynaptic recycling endosome"/>
    <property type="evidence" value="ECO:0000266"/>
    <property type="project" value="RGD"/>
</dbReference>
<dbReference type="GO" id="GO:0098830">
    <property type="term" value="C:presynaptic endosome"/>
    <property type="evidence" value="ECO:0000314"/>
    <property type="project" value="SynGO"/>
</dbReference>
<dbReference type="GO" id="GO:0032991">
    <property type="term" value="C:protein-containing complex"/>
    <property type="evidence" value="ECO:0000266"/>
    <property type="project" value="RGD"/>
</dbReference>
<dbReference type="GO" id="GO:0055037">
    <property type="term" value="C:recycling endosome"/>
    <property type="evidence" value="ECO:0000314"/>
    <property type="project" value="MGI"/>
</dbReference>
<dbReference type="GO" id="GO:0055038">
    <property type="term" value="C:recycling endosome membrane"/>
    <property type="evidence" value="ECO:0007669"/>
    <property type="project" value="UniProtKB-SubCell"/>
</dbReference>
<dbReference type="GO" id="GO:0098685">
    <property type="term" value="C:Schaffer collateral - CA1 synapse"/>
    <property type="evidence" value="ECO:0000314"/>
    <property type="project" value="SynGO"/>
</dbReference>
<dbReference type="GO" id="GO:0000922">
    <property type="term" value="C:spindle pole"/>
    <property type="evidence" value="ECO:0000266"/>
    <property type="project" value="RGD"/>
</dbReference>
<dbReference type="GO" id="GO:0030672">
    <property type="term" value="C:synaptic vesicle membrane"/>
    <property type="evidence" value="ECO:0000314"/>
    <property type="project" value="SynGO"/>
</dbReference>
<dbReference type="GO" id="GO:0005802">
    <property type="term" value="C:trans-Golgi network"/>
    <property type="evidence" value="ECO:0000250"/>
    <property type="project" value="UniProtKB"/>
</dbReference>
<dbReference type="GO" id="GO:0032588">
    <property type="term" value="C:trans-Golgi network membrane"/>
    <property type="evidence" value="ECO:0000250"/>
    <property type="project" value="UniProtKB"/>
</dbReference>
<dbReference type="GO" id="GO:0030133">
    <property type="term" value="C:transport vesicle"/>
    <property type="evidence" value="ECO:0000318"/>
    <property type="project" value="GO_Central"/>
</dbReference>
<dbReference type="GO" id="GO:0031982">
    <property type="term" value="C:vesicle"/>
    <property type="evidence" value="ECO:0000266"/>
    <property type="project" value="RGD"/>
</dbReference>
<dbReference type="GO" id="GO:0051959">
    <property type="term" value="F:dynein light intermediate chain binding"/>
    <property type="evidence" value="ECO:0000250"/>
    <property type="project" value="UniProtKB"/>
</dbReference>
<dbReference type="GO" id="GO:0003925">
    <property type="term" value="F:G protein activity"/>
    <property type="evidence" value="ECO:0007669"/>
    <property type="project" value="UniProtKB-EC"/>
</dbReference>
<dbReference type="GO" id="GO:0005525">
    <property type="term" value="F:GTP binding"/>
    <property type="evidence" value="ECO:0000314"/>
    <property type="project" value="RGD"/>
</dbReference>
<dbReference type="GO" id="GO:0003924">
    <property type="term" value="F:GTPase activity"/>
    <property type="evidence" value="ECO:0000314"/>
    <property type="project" value="RGD"/>
</dbReference>
<dbReference type="GO" id="GO:0008017">
    <property type="term" value="F:microtubule binding"/>
    <property type="evidence" value="ECO:0000266"/>
    <property type="project" value="RGD"/>
</dbReference>
<dbReference type="GO" id="GO:0031489">
    <property type="term" value="F:myosin V binding"/>
    <property type="evidence" value="ECO:0000266"/>
    <property type="project" value="RGD"/>
</dbReference>
<dbReference type="GO" id="GO:0019904">
    <property type="term" value="F:protein domain specific binding"/>
    <property type="evidence" value="ECO:0000266"/>
    <property type="project" value="RGD"/>
</dbReference>
<dbReference type="GO" id="GO:0150093">
    <property type="term" value="P:amyloid-beta clearance by transcytosis"/>
    <property type="evidence" value="ECO:0000266"/>
    <property type="project" value="RGD"/>
</dbReference>
<dbReference type="GO" id="GO:0030953">
    <property type="term" value="P:astral microtubule organization"/>
    <property type="evidence" value="ECO:0000266"/>
    <property type="project" value="RGD"/>
</dbReference>
<dbReference type="GO" id="GO:0061502">
    <property type="term" value="P:early endosome to recycling endosome transport"/>
    <property type="evidence" value="ECO:0000266"/>
    <property type="project" value="RGD"/>
</dbReference>
<dbReference type="GO" id="GO:0090150">
    <property type="term" value="P:establishment of protein localization to membrane"/>
    <property type="evidence" value="ECO:0000266"/>
    <property type="project" value="RGD"/>
</dbReference>
<dbReference type="GO" id="GO:0072594">
    <property type="term" value="P:establishment of protein localization to organelle"/>
    <property type="evidence" value="ECO:0000266"/>
    <property type="project" value="RGD"/>
</dbReference>
<dbReference type="GO" id="GO:0051650">
    <property type="term" value="P:establishment of vesicle localization"/>
    <property type="evidence" value="ECO:0000266"/>
    <property type="project" value="RGD"/>
</dbReference>
<dbReference type="GO" id="GO:0006887">
    <property type="term" value="P:exocytosis"/>
    <property type="evidence" value="ECO:0000318"/>
    <property type="project" value="GO_Central"/>
</dbReference>
<dbReference type="GO" id="GO:1990182">
    <property type="term" value="P:exosomal secretion"/>
    <property type="evidence" value="ECO:0000266"/>
    <property type="project" value="RGD"/>
</dbReference>
<dbReference type="GO" id="GO:0032367">
    <property type="term" value="P:intracellular cholesterol transport"/>
    <property type="evidence" value="ECO:0000250"/>
    <property type="project" value="UniProtKB"/>
</dbReference>
<dbReference type="GO" id="GO:0032402">
    <property type="term" value="P:melanosome transport"/>
    <property type="evidence" value="ECO:0000250"/>
    <property type="project" value="UniProtKB"/>
</dbReference>
<dbReference type="GO" id="GO:0007080">
    <property type="term" value="P:mitotic metaphase chromosome alignment"/>
    <property type="evidence" value="ECO:0000266"/>
    <property type="project" value="RGD"/>
</dbReference>
<dbReference type="GO" id="GO:0090307">
    <property type="term" value="P:mitotic spindle assembly"/>
    <property type="evidence" value="ECO:0000266"/>
    <property type="project" value="RGD"/>
</dbReference>
<dbReference type="GO" id="GO:0036258">
    <property type="term" value="P:multivesicular body assembly"/>
    <property type="evidence" value="ECO:0000266"/>
    <property type="project" value="RGD"/>
</dbReference>
<dbReference type="GO" id="GO:0031175">
    <property type="term" value="P:neuron projection development"/>
    <property type="evidence" value="ECO:0000250"/>
    <property type="project" value="UniProtKB"/>
</dbReference>
<dbReference type="GO" id="GO:0098887">
    <property type="term" value="P:neurotransmitter receptor transport, endosome to postsynaptic membrane"/>
    <property type="evidence" value="ECO:0000314"/>
    <property type="project" value="SynGO"/>
</dbReference>
<dbReference type="GO" id="GO:0010634">
    <property type="term" value="P:positive regulation of epithelial cell migration"/>
    <property type="evidence" value="ECO:0000266"/>
    <property type="project" value="RGD"/>
</dbReference>
<dbReference type="GO" id="GO:0010971">
    <property type="term" value="P:positive regulation of G2/M transition of mitotic cell cycle"/>
    <property type="evidence" value="ECO:0000266"/>
    <property type="project" value="RGD"/>
</dbReference>
<dbReference type="GO" id="GO:1903438">
    <property type="term" value="P:positive regulation of mitotic cytokinetic process"/>
    <property type="evidence" value="ECO:0000266"/>
    <property type="project" value="RGD"/>
</dbReference>
<dbReference type="GO" id="GO:1903078">
    <property type="term" value="P:positive regulation of protein localization to plasma membrane"/>
    <property type="evidence" value="ECO:0000315"/>
    <property type="project" value="RGD"/>
</dbReference>
<dbReference type="GO" id="GO:0034394">
    <property type="term" value="P:protein localization to cell surface"/>
    <property type="evidence" value="ECO:0000266"/>
    <property type="project" value="RGD"/>
</dbReference>
<dbReference type="GO" id="GO:0061512">
    <property type="term" value="P:protein localization to cilium"/>
    <property type="evidence" value="ECO:0000250"/>
    <property type="project" value="UniProtKB"/>
</dbReference>
<dbReference type="GO" id="GO:0072659">
    <property type="term" value="P:protein localization to plasma membrane"/>
    <property type="evidence" value="ECO:0000250"/>
    <property type="project" value="UniProtKB"/>
</dbReference>
<dbReference type="GO" id="GO:0071806">
    <property type="term" value="P:protein transmembrane transport"/>
    <property type="evidence" value="ECO:0000266"/>
    <property type="project" value="RGD"/>
</dbReference>
<dbReference type="GO" id="GO:1902017">
    <property type="term" value="P:regulation of cilium assembly"/>
    <property type="evidence" value="ECO:0000250"/>
    <property type="project" value="UniProtKB"/>
</dbReference>
<dbReference type="GO" id="GO:0032465">
    <property type="term" value="P:regulation of cytokinesis"/>
    <property type="evidence" value="ECO:0000266"/>
    <property type="project" value="RGD"/>
</dbReference>
<dbReference type="GO" id="GO:1902954">
    <property type="term" value="P:regulation of early endosome to recycling endosome transport"/>
    <property type="evidence" value="ECO:0000250"/>
    <property type="project" value="UniProtKB"/>
</dbReference>
<dbReference type="GO" id="GO:2001135">
    <property type="term" value="P:regulation of endocytic recycling"/>
    <property type="evidence" value="ECO:0000250"/>
    <property type="project" value="UniProtKB"/>
</dbReference>
<dbReference type="GO" id="GO:0048169">
    <property type="term" value="P:regulation of long-term neuronal synaptic plasticity"/>
    <property type="evidence" value="ECO:0000315"/>
    <property type="project" value="RGD"/>
</dbReference>
<dbReference type="GO" id="GO:1904779">
    <property type="term" value="P:regulation of protein localization to centrosome"/>
    <property type="evidence" value="ECO:0000250"/>
    <property type="project" value="UniProtKB"/>
</dbReference>
<dbReference type="GO" id="GO:0051223">
    <property type="term" value="P:regulation of protein transport"/>
    <property type="evidence" value="ECO:0000315"/>
    <property type="project" value="RGD"/>
</dbReference>
<dbReference type="GO" id="GO:0060627">
    <property type="term" value="P:regulation of vesicle-mediated transport"/>
    <property type="evidence" value="ECO:0000266"/>
    <property type="project" value="RGD"/>
</dbReference>
<dbReference type="GO" id="GO:0099532">
    <property type="term" value="P:synaptic vesicle endosomal processing"/>
    <property type="evidence" value="ECO:0000314"/>
    <property type="project" value="SynGO"/>
</dbReference>
<dbReference type="GO" id="GO:0016192">
    <property type="term" value="P:vesicle-mediated transport"/>
    <property type="evidence" value="ECO:0000266"/>
    <property type="project" value="RGD"/>
</dbReference>
<dbReference type="GO" id="GO:0099003">
    <property type="term" value="P:vesicle-mediated transport in synapse"/>
    <property type="evidence" value="ECO:0000314"/>
    <property type="project" value="SynGO"/>
</dbReference>
<dbReference type="CDD" id="cd01868">
    <property type="entry name" value="Rab11_like"/>
    <property type="match status" value="1"/>
</dbReference>
<dbReference type="FunFam" id="3.40.50.300:FF:000085">
    <property type="entry name" value="Putative ras-related protein rab-11a"/>
    <property type="match status" value="1"/>
</dbReference>
<dbReference type="Gene3D" id="3.40.50.300">
    <property type="entry name" value="P-loop containing nucleotide triphosphate hydrolases"/>
    <property type="match status" value="1"/>
</dbReference>
<dbReference type="InterPro" id="IPR027417">
    <property type="entry name" value="P-loop_NTPase"/>
</dbReference>
<dbReference type="InterPro" id="IPR050209">
    <property type="entry name" value="Rab_GTPases_membrane_traffic"/>
</dbReference>
<dbReference type="InterPro" id="IPR005225">
    <property type="entry name" value="Small_GTP-bd"/>
</dbReference>
<dbReference type="InterPro" id="IPR001806">
    <property type="entry name" value="Small_GTPase"/>
</dbReference>
<dbReference type="NCBIfam" id="TIGR00231">
    <property type="entry name" value="small_GTP"/>
    <property type="match status" value="1"/>
</dbReference>
<dbReference type="PANTHER" id="PTHR47979">
    <property type="entry name" value="DRAB11-RELATED"/>
    <property type="match status" value="1"/>
</dbReference>
<dbReference type="Pfam" id="PF00071">
    <property type="entry name" value="Ras"/>
    <property type="match status" value="1"/>
</dbReference>
<dbReference type="PRINTS" id="PR00449">
    <property type="entry name" value="RASTRNSFRMNG"/>
</dbReference>
<dbReference type="SMART" id="SM00175">
    <property type="entry name" value="RAB"/>
    <property type="match status" value="1"/>
</dbReference>
<dbReference type="SMART" id="SM00176">
    <property type="entry name" value="RAN"/>
    <property type="match status" value="1"/>
</dbReference>
<dbReference type="SMART" id="SM00173">
    <property type="entry name" value="RAS"/>
    <property type="match status" value="1"/>
</dbReference>
<dbReference type="SMART" id="SM00174">
    <property type="entry name" value="RHO"/>
    <property type="match status" value="1"/>
</dbReference>
<dbReference type="SUPFAM" id="SSF52540">
    <property type="entry name" value="P-loop containing nucleoside triphosphate hydrolases"/>
    <property type="match status" value="1"/>
</dbReference>
<dbReference type="PROSITE" id="PS51419">
    <property type="entry name" value="RAB"/>
    <property type="match status" value="1"/>
</dbReference>